<gene>
    <name evidence="1" type="primary">mtfA</name>
    <name type="ordered locus">E2348C_2085</name>
</gene>
<accession>B7USY4</accession>
<name>MTFA_ECO27</name>
<comment type="function">
    <text evidence="1">Involved in the modulation of the activity of the glucose-phosphotransferase system (glucose-PTS). Interacts with the transcriptional repressor Mlc, preventing its interaction with DNA and leading to the modulation of expression of genes regulated by Mlc, including ptsG, which encodes the PTS system glucose-specific EIICB component.</text>
</comment>
<comment type="function">
    <text evidence="1">Shows zinc-dependent metallopeptidase activity.</text>
</comment>
<comment type="cofactor">
    <cofactor evidence="1">
        <name>Zn(2+)</name>
        <dbReference type="ChEBI" id="CHEBI:29105"/>
    </cofactor>
    <text evidence="1">Binds 1 zinc ion per subunit.</text>
</comment>
<comment type="subunit">
    <text evidence="1">Interacts with Mlc.</text>
</comment>
<comment type="subcellular location">
    <subcellularLocation>
        <location evidence="1">Cytoplasm</location>
    </subcellularLocation>
</comment>
<comment type="similarity">
    <text evidence="1">Belongs to the MtfA family.</text>
</comment>
<protein>
    <recommendedName>
        <fullName evidence="1">Mlc titration factor A</fullName>
    </recommendedName>
    <alternativeName>
        <fullName evidence="1">Probable zinc metallopeptidase MtfA</fullName>
        <ecNumber evidence="1">3.4.11.-</ecNumber>
    </alternativeName>
</protein>
<sequence>MIKWPWKVQESAHQTALPWQEALSIPLLTCLTEQEQSKLVALAERFLQQKRLVPLQGFELNSLRSCRIALLFCLPVLKLGLEWLDGFHEVLIYPAPFVVDDEWEDDVGLVHNQRIVQSGQSWQQGPIVLNWLDIQDSFDASGFNLIIHEVAHKLDTRNGDRASGVPFISLREVAGWEHDLHAAMNNIQEEIELVGENAASIDAYAASDPAECFAVLSEYFFSAPELFAPRFPSLWQRFCQFYQQDPLQRLHHANDTDSFSATNVH</sequence>
<keyword id="KW-0031">Aminopeptidase</keyword>
<keyword id="KW-0963">Cytoplasm</keyword>
<keyword id="KW-0378">Hydrolase</keyword>
<keyword id="KW-0479">Metal-binding</keyword>
<keyword id="KW-0482">Metalloprotease</keyword>
<keyword id="KW-0645">Protease</keyword>
<keyword id="KW-1185">Reference proteome</keyword>
<keyword id="KW-0862">Zinc</keyword>
<feature type="chain" id="PRO_1000185706" description="Mlc titration factor A">
    <location>
        <begin position="1"/>
        <end position="265"/>
    </location>
</feature>
<feature type="binding site" evidence="1">
    <location>
        <position position="111"/>
    </location>
    <ligand>
        <name>Zn(2+)</name>
        <dbReference type="ChEBI" id="CHEBI:29105"/>
    </ligand>
</feature>
<feature type="binding site" evidence="1">
    <location>
        <position position="148"/>
    </location>
    <ligand>
        <name>Zn(2+)</name>
        <dbReference type="ChEBI" id="CHEBI:29105"/>
    </ligand>
</feature>
<feature type="binding site" evidence="1">
    <location>
        <position position="152"/>
    </location>
    <ligand>
        <name>Zn(2+)</name>
        <dbReference type="ChEBI" id="CHEBI:29105"/>
    </ligand>
</feature>
<feature type="binding site" evidence="1">
    <location>
        <position position="211"/>
    </location>
    <ligand>
        <name>Zn(2+)</name>
        <dbReference type="ChEBI" id="CHEBI:29105"/>
    </ligand>
</feature>
<organism>
    <name type="scientific">Escherichia coli O127:H6 (strain E2348/69 / EPEC)</name>
    <dbReference type="NCBI Taxonomy" id="574521"/>
    <lineage>
        <taxon>Bacteria</taxon>
        <taxon>Pseudomonadati</taxon>
        <taxon>Pseudomonadota</taxon>
        <taxon>Gammaproteobacteria</taxon>
        <taxon>Enterobacterales</taxon>
        <taxon>Enterobacteriaceae</taxon>
        <taxon>Escherichia</taxon>
    </lineage>
</organism>
<evidence type="ECO:0000255" key="1">
    <source>
        <dbReference type="HAMAP-Rule" id="MF_01593"/>
    </source>
</evidence>
<dbReference type="EC" id="3.4.11.-" evidence="1"/>
<dbReference type="EMBL" id="FM180568">
    <property type="protein sequence ID" value="CAS09633.1"/>
    <property type="molecule type" value="Genomic_DNA"/>
</dbReference>
<dbReference type="RefSeq" id="WP_012578931.1">
    <property type="nucleotide sequence ID" value="NC_011601.1"/>
</dbReference>
<dbReference type="SMR" id="B7USY4"/>
<dbReference type="MEROPS" id="M90.001"/>
<dbReference type="KEGG" id="ecg:E2348C_2085"/>
<dbReference type="HOGENOM" id="CLU_063037_2_0_6"/>
<dbReference type="Proteomes" id="UP000008205">
    <property type="component" value="Chromosome"/>
</dbReference>
<dbReference type="GO" id="GO:0005829">
    <property type="term" value="C:cytosol"/>
    <property type="evidence" value="ECO:0007669"/>
    <property type="project" value="TreeGrafter"/>
</dbReference>
<dbReference type="GO" id="GO:0004177">
    <property type="term" value="F:aminopeptidase activity"/>
    <property type="evidence" value="ECO:0007669"/>
    <property type="project" value="UniProtKB-UniRule"/>
</dbReference>
<dbReference type="GO" id="GO:0008237">
    <property type="term" value="F:metallopeptidase activity"/>
    <property type="evidence" value="ECO:0007669"/>
    <property type="project" value="UniProtKB-UniRule"/>
</dbReference>
<dbReference type="GO" id="GO:0008270">
    <property type="term" value="F:zinc ion binding"/>
    <property type="evidence" value="ECO:0007669"/>
    <property type="project" value="UniProtKB-UniRule"/>
</dbReference>
<dbReference type="GO" id="GO:0006508">
    <property type="term" value="P:proteolysis"/>
    <property type="evidence" value="ECO:0007669"/>
    <property type="project" value="UniProtKB-KW"/>
</dbReference>
<dbReference type="CDD" id="cd20169">
    <property type="entry name" value="Peptidase_M90_mtfA"/>
    <property type="match status" value="1"/>
</dbReference>
<dbReference type="FunFam" id="1.10.472.150:FF:000001">
    <property type="entry name" value="Protein MtfA"/>
    <property type="match status" value="1"/>
</dbReference>
<dbReference type="FunFam" id="3.40.390.10:FF:000012">
    <property type="entry name" value="Protein MtfA"/>
    <property type="match status" value="1"/>
</dbReference>
<dbReference type="Gene3D" id="3.40.390.10">
    <property type="entry name" value="Collagenase (Catalytic Domain)"/>
    <property type="match status" value="1"/>
</dbReference>
<dbReference type="Gene3D" id="1.10.472.150">
    <property type="entry name" value="Glucose-regulated metallo-peptidase M90, N-terminal domain"/>
    <property type="match status" value="1"/>
</dbReference>
<dbReference type="HAMAP" id="MF_01593">
    <property type="entry name" value="MtfA"/>
    <property type="match status" value="1"/>
</dbReference>
<dbReference type="InterPro" id="IPR024079">
    <property type="entry name" value="MetalloPept_cat_dom_sf"/>
</dbReference>
<dbReference type="InterPro" id="IPR057256">
    <property type="entry name" value="MtfA_enterob"/>
</dbReference>
<dbReference type="InterPro" id="IPR010384">
    <property type="entry name" value="MtfA_fam"/>
</dbReference>
<dbReference type="InterPro" id="IPR042252">
    <property type="entry name" value="MtfA_N"/>
</dbReference>
<dbReference type="NCBIfam" id="NF011939">
    <property type="entry name" value="PRK15410.1"/>
    <property type="match status" value="1"/>
</dbReference>
<dbReference type="PANTHER" id="PTHR30164">
    <property type="entry name" value="MTFA PEPTIDASE"/>
    <property type="match status" value="1"/>
</dbReference>
<dbReference type="PANTHER" id="PTHR30164:SF2">
    <property type="entry name" value="PROTEIN MTFA"/>
    <property type="match status" value="1"/>
</dbReference>
<dbReference type="Pfam" id="PF06167">
    <property type="entry name" value="Peptidase_M90"/>
    <property type="match status" value="1"/>
</dbReference>
<dbReference type="SUPFAM" id="SSF55486">
    <property type="entry name" value="Metalloproteases ('zincins'), catalytic domain"/>
    <property type="match status" value="1"/>
</dbReference>
<proteinExistence type="inferred from homology"/>
<reference key="1">
    <citation type="journal article" date="2009" name="J. Bacteriol.">
        <title>Complete genome sequence and comparative genome analysis of enteropathogenic Escherichia coli O127:H6 strain E2348/69.</title>
        <authorList>
            <person name="Iguchi A."/>
            <person name="Thomson N.R."/>
            <person name="Ogura Y."/>
            <person name="Saunders D."/>
            <person name="Ooka T."/>
            <person name="Henderson I.R."/>
            <person name="Harris D."/>
            <person name="Asadulghani M."/>
            <person name="Kurokawa K."/>
            <person name="Dean P."/>
            <person name="Kenny B."/>
            <person name="Quail M.A."/>
            <person name="Thurston S."/>
            <person name="Dougan G."/>
            <person name="Hayashi T."/>
            <person name="Parkhill J."/>
            <person name="Frankel G."/>
        </authorList>
    </citation>
    <scope>NUCLEOTIDE SEQUENCE [LARGE SCALE GENOMIC DNA]</scope>
    <source>
        <strain>E2348/69 / EPEC</strain>
    </source>
</reference>